<reference key="1">
    <citation type="journal article" date="2007" name="J. Bacteriol.">
        <title>Complete genome of acute rheumatic fever-associated serotype M5 Streptococcus pyogenes strain Manfredo.</title>
        <authorList>
            <person name="Holden M.T.G."/>
            <person name="Scott A."/>
            <person name="Cherevach I."/>
            <person name="Chillingworth T."/>
            <person name="Churcher C."/>
            <person name="Cronin A."/>
            <person name="Dowd L."/>
            <person name="Feltwell T."/>
            <person name="Hamlin N."/>
            <person name="Holroyd S."/>
            <person name="Jagels K."/>
            <person name="Moule S."/>
            <person name="Mungall K."/>
            <person name="Quail M.A."/>
            <person name="Price C."/>
            <person name="Rabbinowitsch E."/>
            <person name="Sharp S."/>
            <person name="Skelton J."/>
            <person name="Whitehead S."/>
            <person name="Barrell B.G."/>
            <person name="Kehoe M."/>
            <person name="Parkhill J."/>
        </authorList>
    </citation>
    <scope>NUCLEOTIDE SEQUENCE [LARGE SCALE GENOMIC DNA]</scope>
    <source>
        <strain>Manfredo</strain>
    </source>
</reference>
<evidence type="ECO:0000255" key="1">
    <source>
        <dbReference type="HAMAP-Rule" id="MF_00052"/>
    </source>
</evidence>
<evidence type="ECO:0000255" key="2">
    <source>
        <dbReference type="PROSITE-ProRule" id="PRU01319"/>
    </source>
</evidence>
<name>RNH2_STRPG</name>
<sequence length="263" mass="28613">MSTSIKAIKESLEAVTSLSDPLFQELATDARLGVQKALKSRQKAIQADLAEEERLEAMLSYEKALYKEGYQAIAGIDEVGRGPLAGPVVAACVILPQHCKIKGLNDSKKIPKSKHETIYQAVKEKALAIGIGIIDNQLIDEVNIYEATKLAMLEAIKQLEGQLTQPDYLLIDAMTLDIAISQQSILKGDANSLSIAAASIVAKVTRDQMMANYDRIFPGYGFAKNAGYGTKEHLQGLKAYGITPIHRKSFEPVKSMCCDSTNP</sequence>
<comment type="function">
    <text evidence="1">Endonuclease that specifically degrades the RNA of RNA-DNA hybrids.</text>
</comment>
<comment type="catalytic activity">
    <reaction evidence="1">
        <text>Endonucleolytic cleavage to 5'-phosphomonoester.</text>
        <dbReference type="EC" id="3.1.26.4"/>
    </reaction>
</comment>
<comment type="cofactor">
    <cofactor evidence="1">
        <name>Mn(2+)</name>
        <dbReference type="ChEBI" id="CHEBI:29035"/>
    </cofactor>
    <cofactor evidence="1">
        <name>Mg(2+)</name>
        <dbReference type="ChEBI" id="CHEBI:18420"/>
    </cofactor>
    <text evidence="1">Manganese or magnesium. Binds 1 divalent metal ion per monomer in the absence of substrate. May bind a second metal ion after substrate binding.</text>
</comment>
<comment type="subcellular location">
    <subcellularLocation>
        <location evidence="1">Cytoplasm</location>
    </subcellularLocation>
</comment>
<comment type="similarity">
    <text evidence="1">Belongs to the RNase HII family.</text>
</comment>
<gene>
    <name evidence="1" type="primary">rnhB</name>
    <name type="ordered locus">SpyM50907</name>
</gene>
<proteinExistence type="inferred from homology"/>
<accession>A2REG0</accession>
<organism>
    <name type="scientific">Streptococcus pyogenes serotype M5 (strain Manfredo)</name>
    <dbReference type="NCBI Taxonomy" id="160491"/>
    <lineage>
        <taxon>Bacteria</taxon>
        <taxon>Bacillati</taxon>
        <taxon>Bacillota</taxon>
        <taxon>Bacilli</taxon>
        <taxon>Lactobacillales</taxon>
        <taxon>Streptococcaceae</taxon>
        <taxon>Streptococcus</taxon>
    </lineage>
</organism>
<dbReference type="EC" id="3.1.26.4" evidence="1"/>
<dbReference type="EMBL" id="AM295007">
    <property type="protein sequence ID" value="CAM30235.1"/>
    <property type="molecule type" value="Genomic_DNA"/>
</dbReference>
<dbReference type="RefSeq" id="WP_011888871.1">
    <property type="nucleotide sequence ID" value="NC_009332.1"/>
</dbReference>
<dbReference type="SMR" id="A2REG0"/>
<dbReference type="KEGG" id="spf:SpyM50907"/>
<dbReference type="HOGENOM" id="CLU_036532_2_1_9"/>
<dbReference type="GO" id="GO:0005737">
    <property type="term" value="C:cytoplasm"/>
    <property type="evidence" value="ECO:0007669"/>
    <property type="project" value="UniProtKB-SubCell"/>
</dbReference>
<dbReference type="GO" id="GO:0032299">
    <property type="term" value="C:ribonuclease H2 complex"/>
    <property type="evidence" value="ECO:0007669"/>
    <property type="project" value="TreeGrafter"/>
</dbReference>
<dbReference type="GO" id="GO:0030145">
    <property type="term" value="F:manganese ion binding"/>
    <property type="evidence" value="ECO:0007669"/>
    <property type="project" value="UniProtKB-UniRule"/>
</dbReference>
<dbReference type="GO" id="GO:0003723">
    <property type="term" value="F:RNA binding"/>
    <property type="evidence" value="ECO:0007669"/>
    <property type="project" value="InterPro"/>
</dbReference>
<dbReference type="GO" id="GO:0004523">
    <property type="term" value="F:RNA-DNA hybrid ribonuclease activity"/>
    <property type="evidence" value="ECO:0007669"/>
    <property type="project" value="UniProtKB-UniRule"/>
</dbReference>
<dbReference type="GO" id="GO:0043137">
    <property type="term" value="P:DNA replication, removal of RNA primer"/>
    <property type="evidence" value="ECO:0007669"/>
    <property type="project" value="TreeGrafter"/>
</dbReference>
<dbReference type="GO" id="GO:0006298">
    <property type="term" value="P:mismatch repair"/>
    <property type="evidence" value="ECO:0007669"/>
    <property type="project" value="TreeGrafter"/>
</dbReference>
<dbReference type="CDD" id="cd07182">
    <property type="entry name" value="RNase_HII_bacteria_HII_like"/>
    <property type="match status" value="1"/>
</dbReference>
<dbReference type="FunFam" id="3.30.420.10:FF:000006">
    <property type="entry name" value="Ribonuclease HII"/>
    <property type="match status" value="1"/>
</dbReference>
<dbReference type="Gene3D" id="3.30.420.10">
    <property type="entry name" value="Ribonuclease H-like superfamily/Ribonuclease H"/>
    <property type="match status" value="1"/>
</dbReference>
<dbReference type="HAMAP" id="MF_00052_B">
    <property type="entry name" value="RNase_HII_B"/>
    <property type="match status" value="1"/>
</dbReference>
<dbReference type="InterPro" id="IPR022898">
    <property type="entry name" value="RNase_HII"/>
</dbReference>
<dbReference type="InterPro" id="IPR001352">
    <property type="entry name" value="RNase_HII/HIII"/>
</dbReference>
<dbReference type="InterPro" id="IPR024567">
    <property type="entry name" value="RNase_HII/HIII_dom"/>
</dbReference>
<dbReference type="InterPro" id="IPR012337">
    <property type="entry name" value="RNaseH-like_sf"/>
</dbReference>
<dbReference type="InterPro" id="IPR036397">
    <property type="entry name" value="RNaseH_sf"/>
</dbReference>
<dbReference type="NCBIfam" id="NF000594">
    <property type="entry name" value="PRK00015.1-1"/>
    <property type="match status" value="1"/>
</dbReference>
<dbReference type="NCBIfam" id="NF000595">
    <property type="entry name" value="PRK00015.1-3"/>
    <property type="match status" value="1"/>
</dbReference>
<dbReference type="PANTHER" id="PTHR10954">
    <property type="entry name" value="RIBONUCLEASE H2 SUBUNIT A"/>
    <property type="match status" value="1"/>
</dbReference>
<dbReference type="PANTHER" id="PTHR10954:SF18">
    <property type="entry name" value="RIBONUCLEASE HII"/>
    <property type="match status" value="1"/>
</dbReference>
<dbReference type="Pfam" id="PF01351">
    <property type="entry name" value="RNase_HII"/>
    <property type="match status" value="1"/>
</dbReference>
<dbReference type="SUPFAM" id="SSF53098">
    <property type="entry name" value="Ribonuclease H-like"/>
    <property type="match status" value="1"/>
</dbReference>
<dbReference type="PROSITE" id="PS51975">
    <property type="entry name" value="RNASE_H_2"/>
    <property type="match status" value="1"/>
</dbReference>
<keyword id="KW-0963">Cytoplasm</keyword>
<keyword id="KW-0255">Endonuclease</keyword>
<keyword id="KW-0378">Hydrolase</keyword>
<keyword id="KW-0464">Manganese</keyword>
<keyword id="KW-0479">Metal-binding</keyword>
<keyword id="KW-0540">Nuclease</keyword>
<feature type="chain" id="PRO_1000031215" description="Ribonuclease HII">
    <location>
        <begin position="1"/>
        <end position="263"/>
    </location>
</feature>
<feature type="domain" description="RNase H type-2" evidence="2">
    <location>
        <begin position="71"/>
        <end position="262"/>
    </location>
</feature>
<feature type="binding site" evidence="1">
    <location>
        <position position="77"/>
    </location>
    <ligand>
        <name>a divalent metal cation</name>
        <dbReference type="ChEBI" id="CHEBI:60240"/>
    </ligand>
</feature>
<feature type="binding site" evidence="1">
    <location>
        <position position="78"/>
    </location>
    <ligand>
        <name>a divalent metal cation</name>
        <dbReference type="ChEBI" id="CHEBI:60240"/>
    </ligand>
</feature>
<feature type="binding site" evidence="1">
    <location>
        <position position="172"/>
    </location>
    <ligand>
        <name>a divalent metal cation</name>
        <dbReference type="ChEBI" id="CHEBI:60240"/>
    </ligand>
</feature>
<protein>
    <recommendedName>
        <fullName evidence="1">Ribonuclease HII</fullName>
        <shortName evidence="1">RNase HII</shortName>
        <ecNumber evidence="1">3.1.26.4</ecNumber>
    </recommendedName>
</protein>